<sequence>MSDLKRSLSEAAAAAFQAAGLSPDFGRVTASDRPDLADFQCNGALAAAKSAKRNPREIAVQVVDVLKADPRLASVEIAGVGFINMRVSTDALSIRANEIAADPRAGAEPLAHPRRVLVDYAGPNVAKPMHVGHLRASIIGESVKRLYRFRGDDVVGDAHFGDWGFQMGLLISAIMEEDAFIRALLERLVEAPREFSKADEDKVMSEFAQRVTLDDLDRLYPAASARQKEDPEFKEKARKATAELQNGRFGYRLLWRHFVNISRVALEREFHALGVDFDLWKGESDVQDLIAPMVRQLEVKGLLVDDQGARIVRVARPGETKKKKLPDGSVVEVESPDPLLVVSSEGSAMYGTTDLATILDRRKSFDPHLILYCVDQRQADHFEQVFRAAYLAGYAEPGSLEHIGFGTMNGSDGKPFKTRAGGVLKLHDLIEMAREKARERLREAGLGAELSQEAFEETAHKVGIAALKFADLQNFRGTSYVFDLDRFTSFEGKTGPYLLYQSVRIKSILRKAAEQKVVSGAIIVGEPAERDLTLLLDAFEGALSEAYDKKAPNFIAEHAYKLAQTFSKFYAACPILSADNDATRASRLALAETTLKQLELALDLLGIEAPERM</sequence>
<reference key="1">
    <citation type="submission" date="2008-01" db="EMBL/GenBank/DDBJ databases">
        <title>Complete sequence of chromosome of Caulobacter sp. K31.</title>
        <authorList>
            <consortium name="US DOE Joint Genome Institute"/>
            <person name="Copeland A."/>
            <person name="Lucas S."/>
            <person name="Lapidus A."/>
            <person name="Barry K."/>
            <person name="Glavina del Rio T."/>
            <person name="Dalin E."/>
            <person name="Tice H."/>
            <person name="Pitluck S."/>
            <person name="Bruce D."/>
            <person name="Goodwin L."/>
            <person name="Thompson L.S."/>
            <person name="Brettin T."/>
            <person name="Detter J.C."/>
            <person name="Han C."/>
            <person name="Schmutz J."/>
            <person name="Larimer F."/>
            <person name="Land M."/>
            <person name="Hauser L."/>
            <person name="Kyrpides N."/>
            <person name="Kim E."/>
            <person name="Stephens C."/>
            <person name="Richardson P."/>
        </authorList>
    </citation>
    <scope>NUCLEOTIDE SEQUENCE [LARGE SCALE GENOMIC DNA]</scope>
    <source>
        <strain>K31</strain>
    </source>
</reference>
<dbReference type="EC" id="6.1.1.19" evidence="1"/>
<dbReference type="EMBL" id="CP000927">
    <property type="protein sequence ID" value="ABZ73509.1"/>
    <property type="molecule type" value="Genomic_DNA"/>
</dbReference>
<dbReference type="SMR" id="B0T019"/>
<dbReference type="STRING" id="366602.Caul_4389"/>
<dbReference type="KEGG" id="cak:Caul_4389"/>
<dbReference type="eggNOG" id="COG0018">
    <property type="taxonomic scope" value="Bacteria"/>
</dbReference>
<dbReference type="HOGENOM" id="CLU_006406_5_1_5"/>
<dbReference type="OrthoDB" id="9803211at2"/>
<dbReference type="GO" id="GO:0005737">
    <property type="term" value="C:cytoplasm"/>
    <property type="evidence" value="ECO:0007669"/>
    <property type="project" value="UniProtKB-SubCell"/>
</dbReference>
<dbReference type="GO" id="GO:0004814">
    <property type="term" value="F:arginine-tRNA ligase activity"/>
    <property type="evidence" value="ECO:0007669"/>
    <property type="project" value="UniProtKB-UniRule"/>
</dbReference>
<dbReference type="GO" id="GO:0005524">
    <property type="term" value="F:ATP binding"/>
    <property type="evidence" value="ECO:0007669"/>
    <property type="project" value="UniProtKB-UniRule"/>
</dbReference>
<dbReference type="GO" id="GO:0006420">
    <property type="term" value="P:arginyl-tRNA aminoacylation"/>
    <property type="evidence" value="ECO:0007669"/>
    <property type="project" value="UniProtKB-UniRule"/>
</dbReference>
<dbReference type="CDD" id="cd00671">
    <property type="entry name" value="ArgRS_core"/>
    <property type="match status" value="1"/>
</dbReference>
<dbReference type="Gene3D" id="3.30.1360.70">
    <property type="entry name" value="Arginyl tRNA synthetase N-terminal domain"/>
    <property type="match status" value="1"/>
</dbReference>
<dbReference type="Gene3D" id="3.40.50.620">
    <property type="entry name" value="HUPs"/>
    <property type="match status" value="1"/>
</dbReference>
<dbReference type="Gene3D" id="1.10.730.10">
    <property type="entry name" value="Isoleucyl-tRNA Synthetase, Domain 1"/>
    <property type="match status" value="1"/>
</dbReference>
<dbReference type="HAMAP" id="MF_00123">
    <property type="entry name" value="Arg_tRNA_synth"/>
    <property type="match status" value="1"/>
</dbReference>
<dbReference type="InterPro" id="IPR001412">
    <property type="entry name" value="aa-tRNA-synth_I_CS"/>
</dbReference>
<dbReference type="InterPro" id="IPR001278">
    <property type="entry name" value="Arg-tRNA-ligase"/>
</dbReference>
<dbReference type="InterPro" id="IPR005148">
    <property type="entry name" value="Arg-tRNA-synth_N"/>
</dbReference>
<dbReference type="InterPro" id="IPR036695">
    <property type="entry name" value="Arg-tRNA-synth_N_sf"/>
</dbReference>
<dbReference type="InterPro" id="IPR035684">
    <property type="entry name" value="ArgRS_core"/>
</dbReference>
<dbReference type="InterPro" id="IPR008909">
    <property type="entry name" value="DALR_anticod-bd"/>
</dbReference>
<dbReference type="InterPro" id="IPR014729">
    <property type="entry name" value="Rossmann-like_a/b/a_fold"/>
</dbReference>
<dbReference type="InterPro" id="IPR009080">
    <property type="entry name" value="tRNAsynth_Ia_anticodon-bd"/>
</dbReference>
<dbReference type="PANTHER" id="PTHR11956:SF5">
    <property type="entry name" value="ARGININE--TRNA LIGASE, CYTOPLASMIC"/>
    <property type="match status" value="1"/>
</dbReference>
<dbReference type="PANTHER" id="PTHR11956">
    <property type="entry name" value="ARGINYL-TRNA SYNTHETASE"/>
    <property type="match status" value="1"/>
</dbReference>
<dbReference type="Pfam" id="PF03485">
    <property type="entry name" value="Arg_tRNA_synt_N"/>
    <property type="match status" value="1"/>
</dbReference>
<dbReference type="Pfam" id="PF05746">
    <property type="entry name" value="DALR_1"/>
    <property type="match status" value="1"/>
</dbReference>
<dbReference type="Pfam" id="PF00750">
    <property type="entry name" value="tRNA-synt_1d"/>
    <property type="match status" value="2"/>
</dbReference>
<dbReference type="PRINTS" id="PR01038">
    <property type="entry name" value="TRNASYNTHARG"/>
</dbReference>
<dbReference type="SMART" id="SM01016">
    <property type="entry name" value="Arg_tRNA_synt_N"/>
    <property type="match status" value="1"/>
</dbReference>
<dbReference type="SMART" id="SM00836">
    <property type="entry name" value="DALR_1"/>
    <property type="match status" value="1"/>
</dbReference>
<dbReference type="SUPFAM" id="SSF47323">
    <property type="entry name" value="Anticodon-binding domain of a subclass of class I aminoacyl-tRNA synthetases"/>
    <property type="match status" value="1"/>
</dbReference>
<dbReference type="SUPFAM" id="SSF55190">
    <property type="entry name" value="Arginyl-tRNA synthetase (ArgRS), N-terminal 'additional' domain"/>
    <property type="match status" value="1"/>
</dbReference>
<dbReference type="SUPFAM" id="SSF52374">
    <property type="entry name" value="Nucleotidylyl transferase"/>
    <property type="match status" value="1"/>
</dbReference>
<dbReference type="PROSITE" id="PS00178">
    <property type="entry name" value="AA_TRNA_LIGASE_I"/>
    <property type="match status" value="1"/>
</dbReference>
<feature type="chain" id="PRO_1000076207" description="Arginine--tRNA ligase">
    <location>
        <begin position="1"/>
        <end position="613"/>
    </location>
</feature>
<feature type="short sequence motif" description="'HIGH' region">
    <location>
        <begin position="123"/>
        <end position="133"/>
    </location>
</feature>
<organism>
    <name type="scientific">Caulobacter sp. (strain K31)</name>
    <dbReference type="NCBI Taxonomy" id="366602"/>
    <lineage>
        <taxon>Bacteria</taxon>
        <taxon>Pseudomonadati</taxon>
        <taxon>Pseudomonadota</taxon>
        <taxon>Alphaproteobacteria</taxon>
        <taxon>Caulobacterales</taxon>
        <taxon>Caulobacteraceae</taxon>
        <taxon>Caulobacter</taxon>
    </lineage>
</organism>
<comment type="catalytic activity">
    <reaction evidence="1">
        <text>tRNA(Arg) + L-arginine + ATP = L-arginyl-tRNA(Arg) + AMP + diphosphate</text>
        <dbReference type="Rhea" id="RHEA:20301"/>
        <dbReference type="Rhea" id="RHEA-COMP:9658"/>
        <dbReference type="Rhea" id="RHEA-COMP:9673"/>
        <dbReference type="ChEBI" id="CHEBI:30616"/>
        <dbReference type="ChEBI" id="CHEBI:32682"/>
        <dbReference type="ChEBI" id="CHEBI:33019"/>
        <dbReference type="ChEBI" id="CHEBI:78442"/>
        <dbReference type="ChEBI" id="CHEBI:78513"/>
        <dbReference type="ChEBI" id="CHEBI:456215"/>
        <dbReference type="EC" id="6.1.1.19"/>
    </reaction>
</comment>
<comment type="subunit">
    <text evidence="1">Monomer.</text>
</comment>
<comment type="subcellular location">
    <subcellularLocation>
        <location evidence="1">Cytoplasm</location>
    </subcellularLocation>
</comment>
<comment type="similarity">
    <text evidence="1">Belongs to the class-I aminoacyl-tRNA synthetase family.</text>
</comment>
<gene>
    <name evidence="1" type="primary">argS</name>
    <name type="ordered locus">Caul_4389</name>
</gene>
<proteinExistence type="inferred from homology"/>
<accession>B0T019</accession>
<protein>
    <recommendedName>
        <fullName evidence="1">Arginine--tRNA ligase</fullName>
        <ecNumber evidence="1">6.1.1.19</ecNumber>
    </recommendedName>
    <alternativeName>
        <fullName evidence="1">Arginyl-tRNA synthetase</fullName>
        <shortName evidence="1">ArgRS</shortName>
    </alternativeName>
</protein>
<keyword id="KW-0030">Aminoacyl-tRNA synthetase</keyword>
<keyword id="KW-0067">ATP-binding</keyword>
<keyword id="KW-0963">Cytoplasm</keyword>
<keyword id="KW-0436">Ligase</keyword>
<keyword id="KW-0547">Nucleotide-binding</keyword>
<keyword id="KW-0648">Protein biosynthesis</keyword>
<name>SYR_CAUSK</name>
<evidence type="ECO:0000255" key="1">
    <source>
        <dbReference type="HAMAP-Rule" id="MF_00123"/>
    </source>
</evidence>